<gene>
    <name type="ordered locus">sce2912</name>
</gene>
<organism>
    <name type="scientific">Sorangium cellulosum (strain So ce56)</name>
    <name type="common">Polyangium cellulosum (strain So ce56)</name>
    <dbReference type="NCBI Taxonomy" id="448385"/>
    <lineage>
        <taxon>Bacteria</taxon>
        <taxon>Pseudomonadati</taxon>
        <taxon>Myxococcota</taxon>
        <taxon>Polyangia</taxon>
        <taxon>Polyangiales</taxon>
        <taxon>Polyangiaceae</taxon>
        <taxon>Sorangium</taxon>
    </lineage>
</organism>
<name>Y2912_SORC5</name>
<comment type="similarity">
    <text evidence="1">Belongs to the UPF0102 family.</text>
</comment>
<comment type="sequence caution" evidence="2">
    <conflict type="erroneous initiation">
        <sequence resource="EMBL-CDS" id="CAN93071"/>
    </conflict>
</comment>
<evidence type="ECO:0000255" key="1">
    <source>
        <dbReference type="HAMAP-Rule" id="MF_00048"/>
    </source>
</evidence>
<evidence type="ECO:0000305" key="2"/>
<keyword id="KW-1185">Reference proteome</keyword>
<sequence length="144" mass="15251">MTRSAPAASATSRTAIGSAGAPAADARRALGARAEDAVVAHLAAQGVEIVARNARVGRLEIDVVARDGPVIAIIEVRTRGAGSYVRALDSIDARKRARVRRAGERLWRATFSRVRGVERMRFDAASVTFLPSGEATVEIIKAAF</sequence>
<accession>A9GEX7</accession>
<proteinExistence type="inferred from homology"/>
<protein>
    <recommendedName>
        <fullName evidence="1">UPF0102 protein sce2912</fullName>
    </recommendedName>
</protein>
<feature type="chain" id="PRO_0000336265" description="UPF0102 protein sce2912">
    <location>
        <begin position="1"/>
        <end position="144"/>
    </location>
</feature>
<dbReference type="EMBL" id="AM746676">
    <property type="protein sequence ID" value="CAN93071.1"/>
    <property type="status" value="ALT_INIT"/>
    <property type="molecule type" value="Genomic_DNA"/>
</dbReference>
<dbReference type="RefSeq" id="WP_049876262.1">
    <property type="nucleotide sequence ID" value="NC_010162.1"/>
</dbReference>
<dbReference type="SMR" id="A9GEX7"/>
<dbReference type="STRING" id="448385.sce2912"/>
<dbReference type="KEGG" id="scl:sce2912"/>
<dbReference type="eggNOG" id="COG0792">
    <property type="taxonomic scope" value="Bacteria"/>
</dbReference>
<dbReference type="HOGENOM" id="CLU_1460376_0_0_7"/>
<dbReference type="OrthoDB" id="9794876at2"/>
<dbReference type="Proteomes" id="UP000002139">
    <property type="component" value="Chromosome"/>
</dbReference>
<dbReference type="GO" id="GO:0003676">
    <property type="term" value="F:nucleic acid binding"/>
    <property type="evidence" value="ECO:0007669"/>
    <property type="project" value="InterPro"/>
</dbReference>
<dbReference type="Gene3D" id="3.40.1350.10">
    <property type="match status" value="1"/>
</dbReference>
<dbReference type="HAMAP" id="MF_00048">
    <property type="entry name" value="UPF0102"/>
    <property type="match status" value="1"/>
</dbReference>
<dbReference type="InterPro" id="IPR011335">
    <property type="entry name" value="Restrct_endonuc-II-like"/>
</dbReference>
<dbReference type="InterPro" id="IPR011856">
    <property type="entry name" value="tRNA_endonuc-like_dom_sf"/>
</dbReference>
<dbReference type="InterPro" id="IPR003509">
    <property type="entry name" value="UPF0102_YraN-like"/>
</dbReference>
<dbReference type="PANTHER" id="PTHR34039">
    <property type="entry name" value="UPF0102 PROTEIN YRAN"/>
    <property type="match status" value="1"/>
</dbReference>
<dbReference type="PANTHER" id="PTHR34039:SF1">
    <property type="entry name" value="UPF0102 PROTEIN YRAN"/>
    <property type="match status" value="1"/>
</dbReference>
<dbReference type="Pfam" id="PF02021">
    <property type="entry name" value="UPF0102"/>
    <property type="match status" value="1"/>
</dbReference>
<dbReference type="SUPFAM" id="SSF52980">
    <property type="entry name" value="Restriction endonuclease-like"/>
    <property type="match status" value="1"/>
</dbReference>
<reference key="1">
    <citation type="journal article" date="2007" name="Nat. Biotechnol.">
        <title>Complete genome sequence of the myxobacterium Sorangium cellulosum.</title>
        <authorList>
            <person name="Schneiker S."/>
            <person name="Perlova O."/>
            <person name="Kaiser O."/>
            <person name="Gerth K."/>
            <person name="Alici A."/>
            <person name="Altmeyer M.O."/>
            <person name="Bartels D."/>
            <person name="Bekel T."/>
            <person name="Beyer S."/>
            <person name="Bode E."/>
            <person name="Bode H.B."/>
            <person name="Bolten C.J."/>
            <person name="Choudhuri J.V."/>
            <person name="Doss S."/>
            <person name="Elnakady Y.A."/>
            <person name="Frank B."/>
            <person name="Gaigalat L."/>
            <person name="Goesmann A."/>
            <person name="Groeger C."/>
            <person name="Gross F."/>
            <person name="Jelsbak L."/>
            <person name="Jelsbak L."/>
            <person name="Kalinowski J."/>
            <person name="Kegler C."/>
            <person name="Knauber T."/>
            <person name="Konietzny S."/>
            <person name="Kopp M."/>
            <person name="Krause L."/>
            <person name="Krug D."/>
            <person name="Linke B."/>
            <person name="Mahmud T."/>
            <person name="Martinez-Arias R."/>
            <person name="McHardy A.C."/>
            <person name="Merai M."/>
            <person name="Meyer F."/>
            <person name="Mormann S."/>
            <person name="Munoz-Dorado J."/>
            <person name="Perez J."/>
            <person name="Pradella S."/>
            <person name="Rachid S."/>
            <person name="Raddatz G."/>
            <person name="Rosenau F."/>
            <person name="Rueckert C."/>
            <person name="Sasse F."/>
            <person name="Scharfe M."/>
            <person name="Schuster S.C."/>
            <person name="Suen G."/>
            <person name="Treuner-Lange A."/>
            <person name="Velicer G.J."/>
            <person name="Vorholter F.-J."/>
            <person name="Weissman K.J."/>
            <person name="Welch R.D."/>
            <person name="Wenzel S.C."/>
            <person name="Whitworth D.E."/>
            <person name="Wilhelm S."/>
            <person name="Wittmann C."/>
            <person name="Bloecker H."/>
            <person name="Puehler A."/>
            <person name="Mueller R."/>
        </authorList>
    </citation>
    <scope>NUCLEOTIDE SEQUENCE [LARGE SCALE GENOMIC DNA]</scope>
    <source>
        <strain>So ce56</strain>
    </source>
</reference>